<proteinExistence type="inferred from homology"/>
<evidence type="ECO:0000250" key="1">
    <source>
        <dbReference type="UniProtKB" id="Q01726"/>
    </source>
</evidence>
<evidence type="ECO:0000255" key="2"/>
<evidence type="ECO:0000255" key="3">
    <source>
        <dbReference type="PROSITE-ProRule" id="PRU00521"/>
    </source>
</evidence>
<protein>
    <recommendedName>
        <fullName>Melanocyte-stimulating hormone receptor</fullName>
        <shortName>MSH-R</shortName>
    </recommendedName>
    <alternativeName>
        <fullName>Melanocortin receptor 1</fullName>
        <shortName>MC1-R</shortName>
    </alternativeName>
</protein>
<keyword id="KW-1003">Cell membrane</keyword>
<keyword id="KW-0297">G-protein coupled receptor</keyword>
<keyword id="KW-0325">Glycoprotein</keyword>
<keyword id="KW-0449">Lipoprotein</keyword>
<keyword id="KW-0472">Membrane</keyword>
<keyword id="KW-0564">Palmitate</keyword>
<keyword id="KW-0675">Receptor</keyword>
<keyword id="KW-0807">Transducer</keyword>
<keyword id="KW-0812">Transmembrane</keyword>
<keyword id="KW-1133">Transmembrane helix</keyword>
<accession>P56448</accession>
<dbReference type="EMBL" id="Y13959">
    <property type="protein sequence ID" value="CAA74293.1"/>
    <property type="molecule type" value="Genomic_DNA"/>
</dbReference>
<dbReference type="SMR" id="P56448"/>
<dbReference type="GlyCosmos" id="P56448">
    <property type="glycosylation" value="1 site, No reported glycans"/>
</dbReference>
<dbReference type="GO" id="GO:0005886">
    <property type="term" value="C:plasma membrane"/>
    <property type="evidence" value="ECO:0000250"/>
    <property type="project" value="UniProtKB"/>
</dbReference>
<dbReference type="GO" id="GO:0004980">
    <property type="term" value="F:melanocyte-stimulating hormone receptor activity"/>
    <property type="evidence" value="ECO:0007669"/>
    <property type="project" value="InterPro"/>
</dbReference>
<dbReference type="CDD" id="cd15351">
    <property type="entry name" value="7tmA_MC1R"/>
    <property type="match status" value="1"/>
</dbReference>
<dbReference type="FunFam" id="1.20.1070.10:FF:000211">
    <property type="entry name" value="Melanocyte-stimulating hormone receptor"/>
    <property type="match status" value="1"/>
</dbReference>
<dbReference type="Gene3D" id="1.20.1070.10">
    <property type="entry name" value="Rhodopsin 7-helix transmembrane proteins"/>
    <property type="match status" value="1"/>
</dbReference>
<dbReference type="InterPro" id="IPR000276">
    <property type="entry name" value="GPCR_Rhodpsn"/>
</dbReference>
<dbReference type="InterPro" id="IPR017452">
    <property type="entry name" value="GPCR_Rhodpsn_7TM"/>
</dbReference>
<dbReference type="InterPro" id="IPR001671">
    <property type="entry name" value="Melcrt_ACTH_rcpt"/>
</dbReference>
<dbReference type="InterPro" id="IPR000761">
    <property type="entry name" value="MSH_rcpt"/>
</dbReference>
<dbReference type="PANTHER" id="PTHR22750">
    <property type="entry name" value="G-PROTEIN COUPLED RECEPTOR"/>
    <property type="match status" value="1"/>
</dbReference>
<dbReference type="Pfam" id="PF00001">
    <property type="entry name" value="7tm_1"/>
    <property type="match status" value="1"/>
</dbReference>
<dbReference type="PRINTS" id="PR00237">
    <property type="entry name" value="GPCRRHODOPSN"/>
</dbReference>
<dbReference type="PRINTS" id="PR00534">
    <property type="entry name" value="MCRFAMILY"/>
</dbReference>
<dbReference type="PRINTS" id="PR00536">
    <property type="entry name" value="MELNOCYTESHR"/>
</dbReference>
<dbReference type="SMART" id="SM01381">
    <property type="entry name" value="7TM_GPCR_Srsx"/>
    <property type="match status" value="1"/>
</dbReference>
<dbReference type="SUPFAM" id="SSF81321">
    <property type="entry name" value="Family A G protein-coupled receptor-like"/>
    <property type="match status" value="1"/>
</dbReference>
<dbReference type="PROSITE" id="PS00237">
    <property type="entry name" value="G_PROTEIN_RECEP_F1_1"/>
    <property type="match status" value="1"/>
</dbReference>
<dbReference type="PROSITE" id="PS50262">
    <property type="entry name" value="G_PROTEIN_RECEP_F1_2"/>
    <property type="match status" value="1"/>
</dbReference>
<feature type="chain" id="PRO_0000069843" description="Melanocyte-stimulating hormone receptor">
    <location>
        <begin position="1"/>
        <end position="317"/>
    </location>
</feature>
<feature type="topological domain" description="Extracellular" evidence="2">
    <location>
        <begin position="1"/>
        <end position="37"/>
    </location>
</feature>
<feature type="transmembrane region" description="Helical; Name=1" evidence="2">
    <location>
        <begin position="38"/>
        <end position="63"/>
    </location>
</feature>
<feature type="topological domain" description="Cytoplasmic" evidence="2">
    <location>
        <begin position="64"/>
        <end position="72"/>
    </location>
</feature>
<feature type="transmembrane region" description="Helical; Name=2" evidence="2">
    <location>
        <begin position="73"/>
        <end position="93"/>
    </location>
</feature>
<feature type="topological domain" description="Extracellular" evidence="2">
    <location>
        <begin position="94"/>
        <end position="118"/>
    </location>
</feature>
<feature type="transmembrane region" description="Helical; Name=3" evidence="2">
    <location>
        <begin position="119"/>
        <end position="140"/>
    </location>
</feature>
<feature type="topological domain" description="Cytoplasmic" evidence="2">
    <location>
        <begin position="141"/>
        <end position="163"/>
    </location>
</feature>
<feature type="transmembrane region" description="Helical; Name=4" evidence="2">
    <location>
        <begin position="164"/>
        <end position="183"/>
    </location>
</feature>
<feature type="topological domain" description="Extracellular" evidence="2">
    <location>
        <begin position="184"/>
        <end position="191"/>
    </location>
</feature>
<feature type="transmembrane region" description="Helical; Name=5" evidence="2">
    <location>
        <begin position="192"/>
        <end position="211"/>
    </location>
</feature>
<feature type="topological domain" description="Cytoplasmic" evidence="2">
    <location>
        <begin position="212"/>
        <end position="240"/>
    </location>
</feature>
<feature type="transmembrane region" description="Helical; Name=6" evidence="2">
    <location>
        <begin position="241"/>
        <end position="266"/>
    </location>
</feature>
<feature type="topological domain" description="Extracellular" evidence="2">
    <location>
        <begin position="267"/>
        <end position="279"/>
    </location>
</feature>
<feature type="transmembrane region" description="Helical; Name=7" evidence="2">
    <location>
        <begin position="280"/>
        <end position="300"/>
    </location>
</feature>
<feature type="topological domain" description="Cytoplasmic" evidence="2">
    <location>
        <begin position="301"/>
        <end position="317"/>
    </location>
</feature>
<feature type="lipid moiety-binding region" description="S-palmitoyl cysteine" evidence="2">
    <location>
        <position position="315"/>
    </location>
</feature>
<feature type="glycosylation site" description="N-linked (GlcNAc...) asparagine" evidence="2">
    <location>
        <position position="29"/>
    </location>
</feature>
<reference key="1">
    <citation type="journal article" date="1999" name="Hereditas">
        <title>The melanocyte-stimulating hormone receptor (MC1-R) gene as a tool in evolutionary studies of artiodactyles.</title>
        <authorList>
            <person name="Klungland H."/>
            <person name="Roed K.H."/>
            <person name="Nesbo C.L."/>
            <person name="Jakobsen K.S."/>
            <person name="Vage D.I."/>
        </authorList>
    </citation>
    <scope>NUCLEOTIDE SEQUENCE [GENOMIC DNA]</scope>
</reference>
<sequence length="317" mass="34895">MPVLGSQRRLLGSLNCTPPATFPLMLAPNRTGPQCLEVSIPNGLFLSLGLVSLVENVLVVAAIAKNSNLHSPMYYFICCLAVSDLLVSVSNVLETAVMLLLEAGALAARAAVVQQLDNVIDVLICGSMVSSLCFLGAIAVDRYISIFYALRYHSVVTLPRAWRIIAAIWVASILTSLLFITYYNHTVVLLCLVGFFIAMLALMAVLYVHMLARACQHARGIARLQKRQRPIHRGFGLKGAATLTILLGVFFLCWGPFFLHLSLIVLCPQHPTCGCIFKNFNLFLALIICNAIVDPLIYAFRSQELRKTLQEVLQCSW</sequence>
<comment type="function">
    <text evidence="1">Receptor for MSH (alpha, beta and gamma) and ACTH. The activity of this receptor is mediated by G proteins which activate adenylate cyclase. Mediates melanogenesis, the production of eumelanin (black/brown) and phaeomelanin (red/yellow), via regulation of cAMP signaling in melanocytes.</text>
</comment>
<comment type="subunit">
    <text evidence="1">Interacts with MGRN1, but does not undergo MGRN1-mediated ubiquitination; this interaction competes with GNAS-binding and thus inhibits agonist-induced cAMP production. Interacts with OPN3; the interaction results in a decrease in MC1R-mediated cAMP signaling and ultimately a decrease in melanin production in melanocytes.</text>
</comment>
<comment type="subcellular location">
    <subcellularLocation>
        <location evidence="1">Cell membrane</location>
        <topology evidence="2">Multi-pass membrane protein</topology>
    </subcellularLocation>
</comment>
<comment type="similarity">
    <text evidence="3">Belongs to the G-protein coupled receptor 1 family.</text>
</comment>
<name>MSHR_RANTA</name>
<organism>
    <name type="scientific">Rangifer tarandus</name>
    <name type="common">Reindeer</name>
    <name type="synonym">Cervus tarandus</name>
    <dbReference type="NCBI Taxonomy" id="9870"/>
    <lineage>
        <taxon>Eukaryota</taxon>
        <taxon>Metazoa</taxon>
        <taxon>Chordata</taxon>
        <taxon>Craniata</taxon>
        <taxon>Vertebrata</taxon>
        <taxon>Euteleostomi</taxon>
        <taxon>Mammalia</taxon>
        <taxon>Eutheria</taxon>
        <taxon>Laurasiatheria</taxon>
        <taxon>Artiodactyla</taxon>
        <taxon>Ruminantia</taxon>
        <taxon>Pecora</taxon>
        <taxon>Cervidae</taxon>
        <taxon>Odocoileinae</taxon>
        <taxon>Rangifer</taxon>
    </lineage>
</organism>
<gene>
    <name type="primary">MC1R</name>
    <name type="synonym">MSHR</name>
</gene>